<reference key="1">
    <citation type="submission" date="2006-09" db="EMBL/GenBank/DDBJ databases">
        <title>Complete sequence of chromosome 1 of Shewanella sp. ANA-3.</title>
        <authorList>
            <person name="Copeland A."/>
            <person name="Lucas S."/>
            <person name="Lapidus A."/>
            <person name="Barry K."/>
            <person name="Detter J.C."/>
            <person name="Glavina del Rio T."/>
            <person name="Hammon N."/>
            <person name="Israni S."/>
            <person name="Dalin E."/>
            <person name="Tice H."/>
            <person name="Pitluck S."/>
            <person name="Chertkov O."/>
            <person name="Brettin T."/>
            <person name="Bruce D."/>
            <person name="Han C."/>
            <person name="Tapia R."/>
            <person name="Gilna P."/>
            <person name="Schmutz J."/>
            <person name="Larimer F."/>
            <person name="Land M."/>
            <person name="Hauser L."/>
            <person name="Kyrpides N."/>
            <person name="Kim E."/>
            <person name="Newman D."/>
            <person name="Salticov C."/>
            <person name="Konstantinidis K."/>
            <person name="Klappenback J."/>
            <person name="Tiedje J."/>
            <person name="Richardson P."/>
        </authorList>
    </citation>
    <scope>NUCLEOTIDE SEQUENCE [LARGE SCALE GENOMIC DNA]</scope>
    <source>
        <strain>ANA-3</strain>
    </source>
</reference>
<protein>
    <recommendedName>
        <fullName evidence="1">Argininosuccinate lyase</fullName>
        <shortName evidence="1">ASAL</shortName>
        <ecNumber evidence="1">4.3.2.1</ecNumber>
    </recommendedName>
    <alternativeName>
        <fullName evidence="1">Arginosuccinase</fullName>
    </alternativeName>
</protein>
<dbReference type="EC" id="4.3.2.1" evidence="1"/>
<dbReference type="EMBL" id="CP000469">
    <property type="protein sequence ID" value="ABK50119.1"/>
    <property type="molecule type" value="Genomic_DNA"/>
</dbReference>
<dbReference type="RefSeq" id="WP_011718630.1">
    <property type="nucleotide sequence ID" value="NC_008577.1"/>
</dbReference>
<dbReference type="SMR" id="A0L250"/>
<dbReference type="STRING" id="94122.Shewana3_3901"/>
<dbReference type="KEGG" id="shn:Shewana3_3901"/>
<dbReference type="eggNOG" id="COG0165">
    <property type="taxonomic scope" value="Bacteria"/>
</dbReference>
<dbReference type="HOGENOM" id="CLU_027272_2_3_6"/>
<dbReference type="OrthoDB" id="9769623at2"/>
<dbReference type="UniPathway" id="UPA00068">
    <property type="reaction ID" value="UER00114"/>
</dbReference>
<dbReference type="Proteomes" id="UP000002589">
    <property type="component" value="Chromosome"/>
</dbReference>
<dbReference type="GO" id="GO:0005829">
    <property type="term" value="C:cytosol"/>
    <property type="evidence" value="ECO:0007669"/>
    <property type="project" value="TreeGrafter"/>
</dbReference>
<dbReference type="GO" id="GO:0004056">
    <property type="term" value="F:argininosuccinate lyase activity"/>
    <property type="evidence" value="ECO:0007669"/>
    <property type="project" value="UniProtKB-UniRule"/>
</dbReference>
<dbReference type="GO" id="GO:0042450">
    <property type="term" value="P:arginine biosynthetic process via ornithine"/>
    <property type="evidence" value="ECO:0007669"/>
    <property type="project" value="InterPro"/>
</dbReference>
<dbReference type="GO" id="GO:0006526">
    <property type="term" value="P:L-arginine biosynthetic process"/>
    <property type="evidence" value="ECO:0007669"/>
    <property type="project" value="UniProtKB-UniRule"/>
</dbReference>
<dbReference type="CDD" id="cd01359">
    <property type="entry name" value="Argininosuccinate_lyase"/>
    <property type="match status" value="1"/>
</dbReference>
<dbReference type="FunFam" id="1.10.40.30:FF:000001">
    <property type="entry name" value="Argininosuccinate lyase"/>
    <property type="match status" value="1"/>
</dbReference>
<dbReference type="FunFam" id="1.20.200.10:FF:000006">
    <property type="entry name" value="Argininosuccinate lyase"/>
    <property type="match status" value="1"/>
</dbReference>
<dbReference type="Gene3D" id="1.10.40.30">
    <property type="entry name" value="Fumarase/aspartase (C-terminal domain)"/>
    <property type="match status" value="1"/>
</dbReference>
<dbReference type="Gene3D" id="1.20.200.10">
    <property type="entry name" value="Fumarase/aspartase (Central domain)"/>
    <property type="match status" value="1"/>
</dbReference>
<dbReference type="Gene3D" id="1.10.275.10">
    <property type="entry name" value="Fumarase/aspartase (N-terminal domain)"/>
    <property type="match status" value="1"/>
</dbReference>
<dbReference type="HAMAP" id="MF_00006">
    <property type="entry name" value="Arg_succ_lyase"/>
    <property type="match status" value="1"/>
</dbReference>
<dbReference type="InterPro" id="IPR029419">
    <property type="entry name" value="Arg_succ_lyase_C"/>
</dbReference>
<dbReference type="InterPro" id="IPR009049">
    <property type="entry name" value="Argininosuccinate_lyase"/>
</dbReference>
<dbReference type="InterPro" id="IPR024083">
    <property type="entry name" value="Fumarase/histidase_N"/>
</dbReference>
<dbReference type="InterPro" id="IPR020557">
    <property type="entry name" value="Fumarate_lyase_CS"/>
</dbReference>
<dbReference type="InterPro" id="IPR000362">
    <property type="entry name" value="Fumarate_lyase_fam"/>
</dbReference>
<dbReference type="InterPro" id="IPR022761">
    <property type="entry name" value="Fumarate_lyase_N"/>
</dbReference>
<dbReference type="InterPro" id="IPR008948">
    <property type="entry name" value="L-Aspartase-like"/>
</dbReference>
<dbReference type="NCBIfam" id="TIGR00838">
    <property type="entry name" value="argH"/>
    <property type="match status" value="1"/>
</dbReference>
<dbReference type="NCBIfam" id="NF008964">
    <property type="entry name" value="PRK12308.1"/>
    <property type="match status" value="1"/>
</dbReference>
<dbReference type="PANTHER" id="PTHR43814">
    <property type="entry name" value="ARGININOSUCCINATE LYASE"/>
    <property type="match status" value="1"/>
</dbReference>
<dbReference type="PANTHER" id="PTHR43814:SF1">
    <property type="entry name" value="ARGININOSUCCINATE LYASE"/>
    <property type="match status" value="1"/>
</dbReference>
<dbReference type="Pfam" id="PF14698">
    <property type="entry name" value="ASL_C2"/>
    <property type="match status" value="1"/>
</dbReference>
<dbReference type="Pfam" id="PF00206">
    <property type="entry name" value="Lyase_1"/>
    <property type="match status" value="1"/>
</dbReference>
<dbReference type="PRINTS" id="PR00145">
    <property type="entry name" value="ARGSUCLYASE"/>
</dbReference>
<dbReference type="PRINTS" id="PR00149">
    <property type="entry name" value="FUMRATELYASE"/>
</dbReference>
<dbReference type="SUPFAM" id="SSF48557">
    <property type="entry name" value="L-aspartase-like"/>
    <property type="match status" value="1"/>
</dbReference>
<dbReference type="PROSITE" id="PS00163">
    <property type="entry name" value="FUMARATE_LYASES"/>
    <property type="match status" value="1"/>
</dbReference>
<evidence type="ECO:0000255" key="1">
    <source>
        <dbReference type="HAMAP-Rule" id="MF_00006"/>
    </source>
</evidence>
<keyword id="KW-0028">Amino-acid biosynthesis</keyword>
<keyword id="KW-0055">Arginine biosynthesis</keyword>
<keyword id="KW-0963">Cytoplasm</keyword>
<keyword id="KW-0456">Lyase</keyword>
<gene>
    <name evidence="1" type="primary">argH</name>
    <name type="ordered locus">Shewana3_3901</name>
</gene>
<accession>A0L250</accession>
<name>ARLY_SHESA</name>
<sequence length="455" mass="49047">MALWGGRFQGETSALFKLFNDSLPVDYRLFEQDVVGSIAWADAIASVGIITATECSDLKKALNELLVEVKGDPAIILASGAEDIHSFVESALIAKVGDLGKKLHTGRSRNDQVATDLKLWCQSEGAALVARLQTLRSELIALAEREFDAVMPGYTHLQRAQPVTFGHWCLAYVEMIERDLSRLTDALKRANTCPLGSGALAGTAYQMDRHALAAALNFASPTLNSLDSVSDRDHVVELCSTASISMIHLSRMAEDLIFFNSGEAGFISLSDEVTSGSSLMPQKKNPDALELIRGKTGRVYGSLVGILTTMKALPLAYNKDMQEDKEGLFDVVDSWAICLDMAALVLSGLVVNRPNALLAAQQGYANATELADYLVSKGMPFREAHHVVGVAVVAAIAKKIPLEGFTLAEFKTFADIIEDDVYPNLTIEACLAKRDVLGGTALTQVKQAISAKKIV</sequence>
<organism>
    <name type="scientific">Shewanella sp. (strain ANA-3)</name>
    <dbReference type="NCBI Taxonomy" id="94122"/>
    <lineage>
        <taxon>Bacteria</taxon>
        <taxon>Pseudomonadati</taxon>
        <taxon>Pseudomonadota</taxon>
        <taxon>Gammaproteobacteria</taxon>
        <taxon>Alteromonadales</taxon>
        <taxon>Shewanellaceae</taxon>
        <taxon>Shewanella</taxon>
    </lineage>
</organism>
<proteinExistence type="inferred from homology"/>
<feature type="chain" id="PRO_1000000540" description="Argininosuccinate lyase">
    <location>
        <begin position="1"/>
        <end position="455"/>
    </location>
</feature>
<comment type="catalytic activity">
    <reaction evidence="1">
        <text>2-(N(omega)-L-arginino)succinate = fumarate + L-arginine</text>
        <dbReference type="Rhea" id="RHEA:24020"/>
        <dbReference type="ChEBI" id="CHEBI:29806"/>
        <dbReference type="ChEBI" id="CHEBI:32682"/>
        <dbReference type="ChEBI" id="CHEBI:57472"/>
        <dbReference type="EC" id="4.3.2.1"/>
    </reaction>
</comment>
<comment type="pathway">
    <text evidence="1">Amino-acid biosynthesis; L-arginine biosynthesis; L-arginine from L-ornithine and carbamoyl phosphate: step 3/3.</text>
</comment>
<comment type="subcellular location">
    <subcellularLocation>
        <location evidence="1">Cytoplasm</location>
    </subcellularLocation>
</comment>
<comment type="similarity">
    <text evidence="1">Belongs to the lyase 1 family. Argininosuccinate lyase subfamily.</text>
</comment>